<organism>
    <name type="scientific">Gallus gallus</name>
    <name type="common">Chicken</name>
    <dbReference type="NCBI Taxonomy" id="9031"/>
    <lineage>
        <taxon>Eukaryota</taxon>
        <taxon>Metazoa</taxon>
        <taxon>Chordata</taxon>
        <taxon>Craniata</taxon>
        <taxon>Vertebrata</taxon>
        <taxon>Euteleostomi</taxon>
        <taxon>Archelosauria</taxon>
        <taxon>Archosauria</taxon>
        <taxon>Dinosauria</taxon>
        <taxon>Saurischia</taxon>
        <taxon>Theropoda</taxon>
        <taxon>Coelurosauria</taxon>
        <taxon>Aves</taxon>
        <taxon>Neognathae</taxon>
        <taxon>Galloanserae</taxon>
        <taxon>Galliformes</taxon>
        <taxon>Phasianidae</taxon>
        <taxon>Phasianinae</taxon>
        <taxon>Gallus</taxon>
    </lineage>
</organism>
<accession>P83038</accession>
<gene>
    <name type="primary">HDAC4</name>
</gene>
<comment type="function">
    <text evidence="2">Responsible for the deacetylation of lysine residues on the N-terminal part of the core histones (H2A, H2B, H3 and H4). Histone deacetylation gives a tag for epigenetic repression and plays an important role in transcriptional regulation, cell cycle progression and developmental events. Histone deacetylases act via the formation of large multiprotein complexes.</text>
</comment>
<comment type="catalytic activity">
    <reaction evidence="2">
        <text>N(6)-acetyl-L-lysyl-[histone] + H2O = L-lysyl-[histone] + acetate</text>
        <dbReference type="Rhea" id="RHEA:58196"/>
        <dbReference type="Rhea" id="RHEA-COMP:9845"/>
        <dbReference type="Rhea" id="RHEA-COMP:11338"/>
        <dbReference type="ChEBI" id="CHEBI:15377"/>
        <dbReference type="ChEBI" id="CHEBI:29969"/>
        <dbReference type="ChEBI" id="CHEBI:30089"/>
        <dbReference type="ChEBI" id="CHEBI:61930"/>
        <dbReference type="EC" id="3.5.1.98"/>
    </reaction>
    <physiologicalReaction direction="left-to-right" evidence="2">
        <dbReference type="Rhea" id="RHEA:58197"/>
    </physiologicalReaction>
</comment>
<comment type="subcellular location">
    <subcellularLocation>
        <location evidence="3">Nucleus</location>
    </subcellularLocation>
</comment>
<comment type="similarity">
    <text evidence="5">Belongs to the histone deacetylase family. HD type 2 subfamily.</text>
</comment>
<name>HDAC4_CHICK</name>
<dbReference type="EC" id="3.5.1.98" evidence="2"/>
<dbReference type="EMBL" id="AB052839">
    <property type="protein sequence ID" value="BAB60957.1"/>
    <property type="molecule type" value="mRNA"/>
</dbReference>
<dbReference type="RefSeq" id="NP_989644.1">
    <property type="nucleotide sequence ID" value="NM_204313.2"/>
</dbReference>
<dbReference type="RefSeq" id="XP_015144580.1">
    <property type="nucleotide sequence ID" value="XM_015289094.1"/>
</dbReference>
<dbReference type="SMR" id="P83038"/>
<dbReference type="BioGRID" id="675230">
    <property type="interactions" value="1"/>
</dbReference>
<dbReference type="FunCoup" id="P83038">
    <property type="interactions" value="1804"/>
</dbReference>
<dbReference type="STRING" id="9031.ENSGALP00000033098"/>
<dbReference type="PaxDb" id="9031-ENSGALP00000033098"/>
<dbReference type="Ensembl" id="ENSGALT00010033011.1">
    <property type="protein sequence ID" value="ENSGALP00010019516.1"/>
    <property type="gene ID" value="ENSGALG00010013697.1"/>
</dbReference>
<dbReference type="GeneID" id="374207"/>
<dbReference type="KEGG" id="gga:374207"/>
<dbReference type="CTD" id="9759"/>
<dbReference type="VEuPathDB" id="HostDB:geneid_374207"/>
<dbReference type="eggNOG" id="KOG1343">
    <property type="taxonomic scope" value="Eukaryota"/>
</dbReference>
<dbReference type="GeneTree" id="ENSGT00940000157440"/>
<dbReference type="InParanoid" id="P83038"/>
<dbReference type="OrthoDB" id="424012at2759"/>
<dbReference type="PhylomeDB" id="P83038"/>
<dbReference type="Reactome" id="R-GGA-350054">
    <property type="pathway name" value="Notch-HLH transcription pathway"/>
</dbReference>
<dbReference type="Reactome" id="R-GGA-4090294">
    <property type="pathway name" value="SUMOylation of intracellular receptors"/>
</dbReference>
<dbReference type="Reactome" id="R-GGA-4551638">
    <property type="pathway name" value="SUMOylation of chromatin organization proteins"/>
</dbReference>
<dbReference type="Reactome" id="R-GGA-8951936">
    <property type="pathway name" value="RUNX3 regulates p14-ARF"/>
</dbReference>
<dbReference type="PRO" id="PR:P83038"/>
<dbReference type="Proteomes" id="UP000000539">
    <property type="component" value="Chromosome 7"/>
</dbReference>
<dbReference type="Bgee" id="ENSGALG00000004288">
    <property type="expression patterns" value="Expressed in cerebellum and 12 other cell types or tissues"/>
</dbReference>
<dbReference type="GO" id="GO:0000118">
    <property type="term" value="C:histone deacetylase complex"/>
    <property type="evidence" value="ECO:0000318"/>
    <property type="project" value="GO_Central"/>
</dbReference>
<dbReference type="GO" id="GO:0140297">
    <property type="term" value="F:DNA-binding transcription factor binding"/>
    <property type="evidence" value="ECO:0000304"/>
    <property type="project" value="UniProtKB"/>
</dbReference>
<dbReference type="GO" id="GO:0004407">
    <property type="term" value="F:histone deacetylase activity"/>
    <property type="evidence" value="ECO:0000318"/>
    <property type="project" value="GO_Central"/>
</dbReference>
<dbReference type="GO" id="GO:0141221">
    <property type="term" value="F:histone deacetylase activity, hydrolytic mechanism"/>
    <property type="evidence" value="ECO:0007669"/>
    <property type="project" value="UniProtKB-EC"/>
</dbReference>
<dbReference type="GO" id="GO:0046872">
    <property type="term" value="F:metal ion binding"/>
    <property type="evidence" value="ECO:0007669"/>
    <property type="project" value="UniProtKB-KW"/>
</dbReference>
<dbReference type="GO" id="GO:0042113">
    <property type="term" value="P:B cell activation"/>
    <property type="evidence" value="ECO:0000304"/>
    <property type="project" value="UniProtKB"/>
</dbReference>
<dbReference type="GO" id="GO:0030183">
    <property type="term" value="P:B cell differentiation"/>
    <property type="evidence" value="ECO:0000304"/>
    <property type="project" value="UniProtKB"/>
</dbReference>
<dbReference type="GO" id="GO:0006325">
    <property type="term" value="P:chromatin organization"/>
    <property type="evidence" value="ECO:0000304"/>
    <property type="project" value="UniProtKB"/>
</dbReference>
<dbReference type="GO" id="GO:0040029">
    <property type="term" value="P:epigenetic regulation of gene expression"/>
    <property type="evidence" value="ECO:0000318"/>
    <property type="project" value="GO_Central"/>
</dbReference>
<dbReference type="GO" id="GO:0006954">
    <property type="term" value="P:inflammatory response"/>
    <property type="evidence" value="ECO:0000304"/>
    <property type="project" value="UniProtKB"/>
</dbReference>
<dbReference type="GO" id="GO:0045892">
    <property type="term" value="P:negative regulation of DNA-templated transcription"/>
    <property type="evidence" value="ECO:0000304"/>
    <property type="project" value="UniProtKB"/>
</dbReference>
<dbReference type="GO" id="GO:0045843">
    <property type="term" value="P:negative regulation of striated muscle tissue development"/>
    <property type="evidence" value="ECO:0000304"/>
    <property type="project" value="UniProtKB"/>
</dbReference>
<dbReference type="GO" id="GO:0000122">
    <property type="term" value="P:negative regulation of transcription by RNA polymerase II"/>
    <property type="evidence" value="ECO:0007669"/>
    <property type="project" value="InterPro"/>
</dbReference>
<dbReference type="GO" id="GO:0007399">
    <property type="term" value="P:nervous system development"/>
    <property type="evidence" value="ECO:0000304"/>
    <property type="project" value="UniProtKB"/>
</dbReference>
<dbReference type="CDD" id="cd10162">
    <property type="entry name" value="ClassIIa_HDAC4_Gln-rich-N"/>
    <property type="match status" value="1"/>
</dbReference>
<dbReference type="CDD" id="cd10006">
    <property type="entry name" value="HDAC4"/>
    <property type="match status" value="1"/>
</dbReference>
<dbReference type="FunFam" id="3.40.800.20:FF:000002">
    <property type="entry name" value="Histone deacetylase"/>
    <property type="match status" value="1"/>
</dbReference>
<dbReference type="Gene3D" id="6.10.250.1550">
    <property type="match status" value="1"/>
</dbReference>
<dbReference type="Gene3D" id="3.40.800.20">
    <property type="entry name" value="Histone deacetylase domain"/>
    <property type="match status" value="1"/>
</dbReference>
<dbReference type="InterPro" id="IPR046949">
    <property type="entry name" value="HDAC4/5/7/9"/>
</dbReference>
<dbReference type="InterPro" id="IPR000286">
    <property type="entry name" value="His_deacetylse"/>
</dbReference>
<dbReference type="InterPro" id="IPR023801">
    <property type="entry name" value="His_deacetylse_dom"/>
</dbReference>
<dbReference type="InterPro" id="IPR037138">
    <property type="entry name" value="His_deacetylse_dom_sf"/>
</dbReference>
<dbReference type="InterPro" id="IPR024643">
    <property type="entry name" value="Hist_deacetylase_Gln_rich_N"/>
</dbReference>
<dbReference type="InterPro" id="IPR023696">
    <property type="entry name" value="Ureohydrolase_dom_sf"/>
</dbReference>
<dbReference type="PANTHER" id="PTHR45364:SF13">
    <property type="entry name" value="HISTONE DEACETYLASE"/>
    <property type="match status" value="1"/>
</dbReference>
<dbReference type="PANTHER" id="PTHR45364">
    <property type="entry name" value="HISTONE DEACETYLASE 9-RELATED"/>
    <property type="match status" value="1"/>
</dbReference>
<dbReference type="Pfam" id="PF12203">
    <property type="entry name" value="HDAC4_Gln"/>
    <property type="match status" value="1"/>
</dbReference>
<dbReference type="Pfam" id="PF00850">
    <property type="entry name" value="Hist_deacetyl"/>
    <property type="match status" value="1"/>
</dbReference>
<dbReference type="PIRSF" id="PIRSF037911">
    <property type="entry name" value="HDAC_II_euk"/>
    <property type="match status" value="1"/>
</dbReference>
<dbReference type="PRINTS" id="PR01270">
    <property type="entry name" value="HDASUPER"/>
</dbReference>
<dbReference type="SUPFAM" id="SSF52768">
    <property type="entry name" value="Arginase/deacetylase"/>
    <property type="match status" value="1"/>
</dbReference>
<proteinExistence type="evidence at transcript level"/>
<feature type="chain" id="PRO_0000114700" description="Histone deacetylase 4">
    <location>
        <begin position="1"/>
        <end position="1080"/>
    </location>
</feature>
<feature type="region of interest" description="Disordered" evidence="4">
    <location>
        <begin position="1"/>
        <end position="25"/>
    </location>
</feature>
<feature type="region of interest" description="Disordered" evidence="4">
    <location>
        <begin position="132"/>
        <end position="165"/>
    </location>
</feature>
<feature type="region of interest" description="Disordered" evidence="4">
    <location>
        <begin position="205"/>
        <end position="312"/>
    </location>
</feature>
<feature type="region of interest" description="Disordered" evidence="4">
    <location>
        <begin position="506"/>
        <end position="527"/>
    </location>
</feature>
<feature type="region of interest" description="Disordered" evidence="4">
    <location>
        <begin position="558"/>
        <end position="579"/>
    </location>
</feature>
<feature type="region of interest" description="Disordered" evidence="4">
    <location>
        <begin position="622"/>
        <end position="646"/>
    </location>
</feature>
<feature type="region of interest" description="Histone deacetylase">
    <location>
        <begin position="651"/>
        <end position="1080"/>
    </location>
</feature>
<feature type="region of interest" description="Disordered" evidence="4">
    <location>
        <begin position="1055"/>
        <end position="1080"/>
    </location>
</feature>
<feature type="short sequence motif" description="PxLPxI/L" evidence="2">
    <location>
        <begin position="348"/>
        <end position="353"/>
    </location>
</feature>
<feature type="compositionally biased region" description="Basic and acidic residues" evidence="4">
    <location>
        <begin position="132"/>
        <end position="162"/>
    </location>
</feature>
<feature type="compositionally biased region" description="Polar residues" evidence="4">
    <location>
        <begin position="205"/>
        <end position="224"/>
    </location>
</feature>
<feature type="compositionally biased region" description="Basic and acidic residues" evidence="4">
    <location>
        <begin position="233"/>
        <end position="244"/>
    </location>
</feature>
<feature type="compositionally biased region" description="Basic and acidic residues" evidence="4">
    <location>
        <begin position="258"/>
        <end position="273"/>
    </location>
</feature>
<feature type="compositionally biased region" description="Low complexity" evidence="4">
    <location>
        <begin position="289"/>
        <end position="312"/>
    </location>
</feature>
<feature type="compositionally biased region" description="Basic and acidic residues" evidence="4">
    <location>
        <begin position="509"/>
        <end position="527"/>
    </location>
</feature>
<feature type="compositionally biased region" description="Acidic residues" evidence="4">
    <location>
        <begin position="560"/>
        <end position="571"/>
    </location>
</feature>
<feature type="compositionally biased region" description="Polar residues" evidence="4">
    <location>
        <begin position="625"/>
        <end position="637"/>
    </location>
</feature>
<feature type="active site" evidence="1">
    <location>
        <position position="799"/>
    </location>
</feature>
<feature type="binding site" evidence="1">
    <location>
        <position position="663"/>
    </location>
    <ligand>
        <name>Zn(2+)</name>
        <dbReference type="ChEBI" id="CHEBI:29105"/>
    </ligand>
</feature>
<feature type="binding site" evidence="1">
    <location>
        <position position="665"/>
    </location>
    <ligand>
        <name>Zn(2+)</name>
        <dbReference type="ChEBI" id="CHEBI:29105"/>
    </ligand>
</feature>
<feature type="binding site" evidence="1">
    <location>
        <position position="671"/>
    </location>
    <ligand>
        <name>Zn(2+)</name>
        <dbReference type="ChEBI" id="CHEBI:29105"/>
    </ligand>
</feature>
<feature type="binding site" evidence="1">
    <location>
        <position position="747"/>
    </location>
    <ligand>
        <name>Zn(2+)</name>
        <dbReference type="ChEBI" id="CHEBI:29105"/>
    </ligand>
</feature>
<keyword id="KW-0156">Chromatin regulator</keyword>
<keyword id="KW-0378">Hydrolase</keyword>
<keyword id="KW-0479">Metal-binding</keyword>
<keyword id="KW-0539">Nucleus</keyword>
<keyword id="KW-1185">Reference proteome</keyword>
<keyword id="KW-0678">Repressor</keyword>
<keyword id="KW-0804">Transcription</keyword>
<keyword id="KW-0805">Transcription regulation</keyword>
<keyword id="KW-0862">Zinc</keyword>
<sequence>MSSQSHPDGLSGRDQPVELLNPPRVNHMPSSVDVSTALPLQVAPTSVPMDLRLDHQFPMPVTEPTLREQQLQQELLALKQKQQIQRQILIAEFQRQHEQLSRQHEAQLHEHIKQQEMLAMKHQQELLEHQRKLEQHRQEQELEKQHREQKLQQLKNKEKGKESAVASTEVKMKLQEFVLNKKKALAHRNLNHCISSDPRFWYGKTQHSSLDQSSPPQSGVSGTYNHPVLGMYDSKDDFPLRKTASEPNLKLRSRLKQKVAERRSSPLLRRKDGPVVTALKKRPLDVTDSACNSAPGSGPSSPNNSSNNISAENGITGSVTSIQAETSLAHRLVNREGSVTQLPLYTSPSLPNITLGLPATGPSSGGSAQQDAERLAIPALQQRISLFPGTHLTPYLSTTTLERDGGTAHNPLLQHMVLLEQPTAQTPLVTGLPLHAQSLVGGERVSPSIHKLRQHRPLGRTQSAPLPQNAQALQQLVIQQQHQQFLEKHKQQFQQQQLHINKIISKPNEPARQHESHPEETEEELREHQALLEEPYSDRVSSQKEVPGLANMVQVKQEPIESDEEEAEPQQELESGQRQAEQELLFRQQALLLEQQRIHQLRNYQASLEAAGMPVSFGGHRPLSRAQSSPASATFPMSVQEPPTKPRFTTGLVYDTLMLKHQCTCGNTNSHPEHAGRIQSIWSRLQETGLRGKCECIRGRKATLEELQTVHSEAHTLLYGTNPLNRQKLDSKKLLGSLTSMFVRLPCGGVGVDSDTIWNEVHSSGAARLAVGCVIELVFKVATGELKNGFAVVRPPGHHAEESTPMGFCYFNSVAIAAKLLQQRLNVSKILIVDWDVHHGNGTQQAFYNDPNVLYISLHRYDDGNFFPGSGAPDEVGTGAGVGFNVNMAFTGGLDPPMGDTEYLTAFRTVVMPIANEFAPDVVLVSSGFDAVEGHPTPLGGYNLSAKCFGYLTKQLMGLAGGRVVLALEGGHDLTAICDASEACVSALLGNELDPLPEKVLQQRANANAVHSMEKVIEIHSKYWHSLQRYASTVGYSLVEAQKCENEEAETVTAMASLSVGVKPAEKRPDDEPMEEEPPL</sequence>
<evidence type="ECO:0000250" key="1"/>
<evidence type="ECO:0000250" key="2">
    <source>
        <dbReference type="UniProtKB" id="P56524"/>
    </source>
</evidence>
<evidence type="ECO:0000250" key="3">
    <source>
        <dbReference type="UniProtKB" id="Q6NZM9"/>
    </source>
</evidence>
<evidence type="ECO:0000256" key="4">
    <source>
        <dbReference type="SAM" id="MobiDB-lite"/>
    </source>
</evidence>
<evidence type="ECO:0000305" key="5"/>
<protein>
    <recommendedName>
        <fullName evidence="2">Histone deacetylase 4</fullName>
        <shortName>HD4</shortName>
        <ecNumber evidence="2">3.5.1.98</ecNumber>
    </recommendedName>
</protein>
<reference key="1">
    <citation type="submission" date="2000-12" db="EMBL/GenBank/DDBJ databases">
        <authorList>
            <person name="Takechi S."/>
            <person name="Azuma R."/>
            <person name="Nakayama T."/>
        </authorList>
    </citation>
    <scope>NUCLEOTIDE SEQUENCE [MRNA]</scope>
</reference>